<organism>
    <name type="scientific">Thermotoga petrophila (strain ATCC BAA-488 / DSM 13995 / JCM 10881 / RKU-1)</name>
    <dbReference type="NCBI Taxonomy" id="390874"/>
    <lineage>
        <taxon>Bacteria</taxon>
        <taxon>Thermotogati</taxon>
        <taxon>Thermotogota</taxon>
        <taxon>Thermotogae</taxon>
        <taxon>Thermotogales</taxon>
        <taxon>Thermotogaceae</taxon>
        <taxon>Thermotoga</taxon>
    </lineage>
</organism>
<dbReference type="EC" id="1.2.1.38" evidence="1"/>
<dbReference type="EMBL" id="CP000702">
    <property type="protein sequence ID" value="ABQ47086.1"/>
    <property type="molecule type" value="Genomic_DNA"/>
</dbReference>
<dbReference type="RefSeq" id="WP_011943614.1">
    <property type="nucleotide sequence ID" value="NC_009486.1"/>
</dbReference>
<dbReference type="SMR" id="A5ILL3"/>
<dbReference type="STRING" id="390874.Tpet_1069"/>
<dbReference type="KEGG" id="tpt:Tpet_1069"/>
<dbReference type="eggNOG" id="COG0002">
    <property type="taxonomic scope" value="Bacteria"/>
</dbReference>
<dbReference type="HOGENOM" id="CLU_006384_0_1_0"/>
<dbReference type="UniPathway" id="UPA00068">
    <property type="reaction ID" value="UER00108"/>
</dbReference>
<dbReference type="Proteomes" id="UP000006558">
    <property type="component" value="Chromosome"/>
</dbReference>
<dbReference type="GO" id="GO:0005737">
    <property type="term" value="C:cytoplasm"/>
    <property type="evidence" value="ECO:0007669"/>
    <property type="project" value="UniProtKB-SubCell"/>
</dbReference>
<dbReference type="GO" id="GO:0003942">
    <property type="term" value="F:N-acetyl-gamma-glutamyl-phosphate reductase activity"/>
    <property type="evidence" value="ECO:0007669"/>
    <property type="project" value="UniProtKB-UniRule"/>
</dbReference>
<dbReference type="GO" id="GO:0051287">
    <property type="term" value="F:NAD binding"/>
    <property type="evidence" value="ECO:0007669"/>
    <property type="project" value="InterPro"/>
</dbReference>
<dbReference type="GO" id="GO:0070401">
    <property type="term" value="F:NADP+ binding"/>
    <property type="evidence" value="ECO:0007669"/>
    <property type="project" value="InterPro"/>
</dbReference>
<dbReference type="GO" id="GO:0006526">
    <property type="term" value="P:L-arginine biosynthetic process"/>
    <property type="evidence" value="ECO:0007669"/>
    <property type="project" value="UniProtKB-UniRule"/>
</dbReference>
<dbReference type="CDD" id="cd23934">
    <property type="entry name" value="AGPR_1_C"/>
    <property type="match status" value="1"/>
</dbReference>
<dbReference type="CDD" id="cd17895">
    <property type="entry name" value="AGPR_1_N"/>
    <property type="match status" value="1"/>
</dbReference>
<dbReference type="FunFam" id="3.30.360.10:FF:000014">
    <property type="entry name" value="N-acetyl-gamma-glutamyl-phosphate reductase"/>
    <property type="match status" value="1"/>
</dbReference>
<dbReference type="Gene3D" id="3.30.360.10">
    <property type="entry name" value="Dihydrodipicolinate Reductase, domain 2"/>
    <property type="match status" value="1"/>
</dbReference>
<dbReference type="Gene3D" id="3.40.50.720">
    <property type="entry name" value="NAD(P)-binding Rossmann-like Domain"/>
    <property type="match status" value="1"/>
</dbReference>
<dbReference type="HAMAP" id="MF_00150">
    <property type="entry name" value="ArgC_type1"/>
    <property type="match status" value="1"/>
</dbReference>
<dbReference type="InterPro" id="IPR023013">
    <property type="entry name" value="AGPR_AS"/>
</dbReference>
<dbReference type="InterPro" id="IPR000706">
    <property type="entry name" value="AGPR_type-1"/>
</dbReference>
<dbReference type="InterPro" id="IPR036291">
    <property type="entry name" value="NAD(P)-bd_dom_sf"/>
</dbReference>
<dbReference type="InterPro" id="IPR050085">
    <property type="entry name" value="NAGSA_dehydrogenase"/>
</dbReference>
<dbReference type="InterPro" id="IPR000534">
    <property type="entry name" value="Semialdehyde_DH_NAD-bd"/>
</dbReference>
<dbReference type="NCBIfam" id="TIGR01850">
    <property type="entry name" value="argC"/>
    <property type="match status" value="1"/>
</dbReference>
<dbReference type="PANTHER" id="PTHR32338:SF10">
    <property type="entry name" value="N-ACETYL-GAMMA-GLUTAMYL-PHOSPHATE REDUCTASE, CHLOROPLASTIC-RELATED"/>
    <property type="match status" value="1"/>
</dbReference>
<dbReference type="PANTHER" id="PTHR32338">
    <property type="entry name" value="N-ACETYL-GAMMA-GLUTAMYL-PHOSPHATE REDUCTASE, CHLOROPLASTIC-RELATED-RELATED"/>
    <property type="match status" value="1"/>
</dbReference>
<dbReference type="Pfam" id="PF01118">
    <property type="entry name" value="Semialdhyde_dh"/>
    <property type="match status" value="1"/>
</dbReference>
<dbReference type="Pfam" id="PF22698">
    <property type="entry name" value="Semialdhyde_dhC_1"/>
    <property type="match status" value="1"/>
</dbReference>
<dbReference type="SMART" id="SM00859">
    <property type="entry name" value="Semialdhyde_dh"/>
    <property type="match status" value="1"/>
</dbReference>
<dbReference type="SUPFAM" id="SSF55347">
    <property type="entry name" value="Glyceraldehyde-3-phosphate dehydrogenase-like, C-terminal domain"/>
    <property type="match status" value="1"/>
</dbReference>
<dbReference type="SUPFAM" id="SSF51735">
    <property type="entry name" value="NAD(P)-binding Rossmann-fold domains"/>
    <property type="match status" value="1"/>
</dbReference>
<dbReference type="PROSITE" id="PS01224">
    <property type="entry name" value="ARGC"/>
    <property type="match status" value="1"/>
</dbReference>
<comment type="function">
    <text evidence="1">Catalyzes the NADPH-dependent reduction of N-acetyl-5-glutamyl phosphate to yield N-acetyl-L-glutamate 5-semialdehyde.</text>
</comment>
<comment type="catalytic activity">
    <reaction evidence="1">
        <text>N-acetyl-L-glutamate 5-semialdehyde + phosphate + NADP(+) = N-acetyl-L-glutamyl 5-phosphate + NADPH + H(+)</text>
        <dbReference type="Rhea" id="RHEA:21588"/>
        <dbReference type="ChEBI" id="CHEBI:15378"/>
        <dbReference type="ChEBI" id="CHEBI:29123"/>
        <dbReference type="ChEBI" id="CHEBI:43474"/>
        <dbReference type="ChEBI" id="CHEBI:57783"/>
        <dbReference type="ChEBI" id="CHEBI:57936"/>
        <dbReference type="ChEBI" id="CHEBI:58349"/>
        <dbReference type="EC" id="1.2.1.38"/>
    </reaction>
</comment>
<comment type="pathway">
    <text evidence="1">Amino-acid biosynthesis; L-arginine biosynthesis; N(2)-acetyl-L-ornithine from L-glutamate: step 3/4.</text>
</comment>
<comment type="subcellular location">
    <subcellularLocation>
        <location evidence="1">Cytoplasm</location>
    </subcellularLocation>
</comment>
<comment type="similarity">
    <text evidence="1">Belongs to the NAGSA dehydrogenase family. Type 1 subfamily.</text>
</comment>
<protein>
    <recommendedName>
        <fullName evidence="1">N-acetyl-gamma-glutamyl-phosphate reductase</fullName>
        <shortName evidence="1">AGPR</shortName>
        <ecNumber evidence="1">1.2.1.38</ecNumber>
    </recommendedName>
    <alternativeName>
        <fullName evidence="1">N-acetyl-glutamate semialdehyde dehydrogenase</fullName>
        <shortName evidence="1">NAGSA dehydrogenase</shortName>
    </alternativeName>
</protein>
<evidence type="ECO:0000255" key="1">
    <source>
        <dbReference type="HAMAP-Rule" id="MF_00150"/>
    </source>
</evidence>
<sequence length="339" mass="38069">MIRVGIIGATGYTGLELVRLLKNHPEAKITYLSSRTYAGKKLEEVFPSTLENSILSEFDPEKVSKNCDVLFTALPAGASYDLVRELKGVKIIDLGADFRFDDPGVYREWYGKELSGYENIKRVYGLPELHREEIKNAQVVGNPGCYPTSVILALAPALKRNLVDPETILVDAKSGVSGAGRKEKVDYLFSEVNESLRPYNVAKHRHVPEMEQELEKISGKKVNVVFTPHLVPMTRGILSTIYVKTDKSLEEIHEAYLEFYRNEPFVHVLPMGIYPSTKWCYGSNHVFIGMQMEERTNTLILMSAIDNLVKGASGQAVQNMNIMFGLDETKGLEFTPIYP</sequence>
<proteinExistence type="inferred from homology"/>
<gene>
    <name evidence="1" type="primary">argC</name>
    <name type="ordered locus">Tpet_1069</name>
</gene>
<reference key="1">
    <citation type="submission" date="2007-05" db="EMBL/GenBank/DDBJ databases">
        <title>Complete sequence of Thermotoga petrophila RKU-1.</title>
        <authorList>
            <consortium name="US DOE Joint Genome Institute"/>
            <person name="Copeland A."/>
            <person name="Lucas S."/>
            <person name="Lapidus A."/>
            <person name="Barry K."/>
            <person name="Glavina del Rio T."/>
            <person name="Dalin E."/>
            <person name="Tice H."/>
            <person name="Pitluck S."/>
            <person name="Sims D."/>
            <person name="Brettin T."/>
            <person name="Bruce D."/>
            <person name="Detter J.C."/>
            <person name="Han C."/>
            <person name="Tapia R."/>
            <person name="Schmutz J."/>
            <person name="Larimer F."/>
            <person name="Land M."/>
            <person name="Hauser L."/>
            <person name="Kyrpides N."/>
            <person name="Mikhailova N."/>
            <person name="Nelson K."/>
            <person name="Gogarten J.P."/>
            <person name="Noll K."/>
            <person name="Richardson P."/>
        </authorList>
    </citation>
    <scope>NUCLEOTIDE SEQUENCE [LARGE SCALE GENOMIC DNA]</scope>
    <source>
        <strain>ATCC BAA-488 / DSM 13995 / JCM 10881 / RKU-1</strain>
    </source>
</reference>
<name>ARGC_THEP1</name>
<feature type="chain" id="PRO_1000011076" description="N-acetyl-gamma-glutamyl-phosphate reductase">
    <location>
        <begin position="1"/>
        <end position="339"/>
    </location>
</feature>
<feature type="active site" evidence="1">
    <location>
        <position position="145"/>
    </location>
</feature>
<accession>A5ILL3</accession>
<keyword id="KW-0028">Amino-acid biosynthesis</keyword>
<keyword id="KW-0055">Arginine biosynthesis</keyword>
<keyword id="KW-0963">Cytoplasm</keyword>
<keyword id="KW-0521">NADP</keyword>
<keyword id="KW-0560">Oxidoreductase</keyword>